<accession>O88735</accession>
<accession>Q3V0B9</accession>
<accession>Q7TQL9</accession>
<accession>Q80V60</accession>
<reference key="1">
    <citation type="journal article" date="1998" name="Differentiation">
        <title>The distribution of murine 115-kDa epithelial microtubule-associated protein (E-MAP-115) during embryogenesis and in adult organs suggests a role in epithelial polarization and differentiation.</title>
        <authorList>
            <person name="Fabre-Jonca N."/>
            <person name="Allaman J.-M."/>
            <person name="Radlgruber G."/>
            <person name="Meda P."/>
            <person name="Kiss J.Z."/>
            <person name="French L.E."/>
            <person name="Masson D."/>
        </authorList>
    </citation>
    <scope>NUCLEOTIDE SEQUENCE [MRNA] (ISOFORM 1)</scope>
    <scope>TISSUE SPECIFICITY</scope>
    <scope>DEVELOPMENTAL STAGE</scope>
    <source>
        <strain>C57BL/6 X CBA</strain>
    </source>
</reference>
<reference key="2">
    <citation type="journal article" date="2003" name="J. Biol. Chem.">
        <title>Microtubule-associated protein 7 increases the membrane expression of transient receptor potential vanilloid 4 (TRPV4).</title>
        <authorList>
            <person name="Suzuki M."/>
            <person name="Hirao A."/>
            <person name="Mizuno A."/>
        </authorList>
    </citation>
    <scope>NUCLEOTIDE SEQUENCE [MRNA] (ISOFORM 1)</scope>
    <scope>FUNCTION</scope>
    <scope>SUBCELLULAR LOCATION</scope>
    <scope>TISSUE SPECIFICITY</scope>
    <scope>INTERACTION WITH TRPV4</scope>
    <source>
        <tissue>Kidney</tissue>
    </source>
</reference>
<reference key="3">
    <citation type="journal article" date="2005" name="J. Biol. Chem.">
        <authorList>
            <person name="Suzuki M."/>
            <person name="Hirao A."/>
            <person name="Mizuno A."/>
        </authorList>
    </citation>
    <scope>ERRATUM OF PUBMED:14517216</scope>
</reference>
<reference key="4">
    <citation type="journal article" date="2005" name="Science">
        <title>The transcriptional landscape of the mammalian genome.</title>
        <authorList>
            <person name="Carninci P."/>
            <person name="Kasukawa T."/>
            <person name="Katayama S."/>
            <person name="Gough J."/>
            <person name="Frith M.C."/>
            <person name="Maeda N."/>
            <person name="Oyama R."/>
            <person name="Ravasi T."/>
            <person name="Lenhard B."/>
            <person name="Wells C."/>
            <person name="Kodzius R."/>
            <person name="Shimokawa K."/>
            <person name="Bajic V.B."/>
            <person name="Brenner S.E."/>
            <person name="Batalov S."/>
            <person name="Forrest A.R."/>
            <person name="Zavolan M."/>
            <person name="Davis M.J."/>
            <person name="Wilming L.G."/>
            <person name="Aidinis V."/>
            <person name="Allen J.E."/>
            <person name="Ambesi-Impiombato A."/>
            <person name="Apweiler R."/>
            <person name="Aturaliya R.N."/>
            <person name="Bailey T.L."/>
            <person name="Bansal M."/>
            <person name="Baxter L."/>
            <person name="Beisel K.W."/>
            <person name="Bersano T."/>
            <person name="Bono H."/>
            <person name="Chalk A.M."/>
            <person name="Chiu K.P."/>
            <person name="Choudhary V."/>
            <person name="Christoffels A."/>
            <person name="Clutterbuck D.R."/>
            <person name="Crowe M.L."/>
            <person name="Dalla E."/>
            <person name="Dalrymple B.P."/>
            <person name="de Bono B."/>
            <person name="Della Gatta G."/>
            <person name="di Bernardo D."/>
            <person name="Down T."/>
            <person name="Engstrom P."/>
            <person name="Fagiolini M."/>
            <person name="Faulkner G."/>
            <person name="Fletcher C.F."/>
            <person name="Fukushima T."/>
            <person name="Furuno M."/>
            <person name="Futaki S."/>
            <person name="Gariboldi M."/>
            <person name="Georgii-Hemming P."/>
            <person name="Gingeras T.R."/>
            <person name="Gojobori T."/>
            <person name="Green R.E."/>
            <person name="Gustincich S."/>
            <person name="Harbers M."/>
            <person name="Hayashi Y."/>
            <person name="Hensch T.K."/>
            <person name="Hirokawa N."/>
            <person name="Hill D."/>
            <person name="Huminiecki L."/>
            <person name="Iacono M."/>
            <person name="Ikeo K."/>
            <person name="Iwama A."/>
            <person name="Ishikawa T."/>
            <person name="Jakt M."/>
            <person name="Kanapin A."/>
            <person name="Katoh M."/>
            <person name="Kawasawa Y."/>
            <person name="Kelso J."/>
            <person name="Kitamura H."/>
            <person name="Kitano H."/>
            <person name="Kollias G."/>
            <person name="Krishnan S.P."/>
            <person name="Kruger A."/>
            <person name="Kummerfeld S.K."/>
            <person name="Kurochkin I.V."/>
            <person name="Lareau L.F."/>
            <person name="Lazarevic D."/>
            <person name="Lipovich L."/>
            <person name="Liu J."/>
            <person name="Liuni S."/>
            <person name="McWilliam S."/>
            <person name="Madan Babu M."/>
            <person name="Madera M."/>
            <person name="Marchionni L."/>
            <person name="Matsuda H."/>
            <person name="Matsuzawa S."/>
            <person name="Miki H."/>
            <person name="Mignone F."/>
            <person name="Miyake S."/>
            <person name="Morris K."/>
            <person name="Mottagui-Tabar S."/>
            <person name="Mulder N."/>
            <person name="Nakano N."/>
            <person name="Nakauchi H."/>
            <person name="Ng P."/>
            <person name="Nilsson R."/>
            <person name="Nishiguchi S."/>
            <person name="Nishikawa S."/>
            <person name="Nori F."/>
            <person name="Ohara O."/>
            <person name="Okazaki Y."/>
            <person name="Orlando V."/>
            <person name="Pang K.C."/>
            <person name="Pavan W.J."/>
            <person name="Pavesi G."/>
            <person name="Pesole G."/>
            <person name="Petrovsky N."/>
            <person name="Piazza S."/>
            <person name="Reed J."/>
            <person name="Reid J.F."/>
            <person name="Ring B.Z."/>
            <person name="Ringwald M."/>
            <person name="Rost B."/>
            <person name="Ruan Y."/>
            <person name="Salzberg S.L."/>
            <person name="Sandelin A."/>
            <person name="Schneider C."/>
            <person name="Schoenbach C."/>
            <person name="Sekiguchi K."/>
            <person name="Semple C.A."/>
            <person name="Seno S."/>
            <person name="Sessa L."/>
            <person name="Sheng Y."/>
            <person name="Shibata Y."/>
            <person name="Shimada H."/>
            <person name="Shimada K."/>
            <person name="Silva D."/>
            <person name="Sinclair B."/>
            <person name="Sperling S."/>
            <person name="Stupka E."/>
            <person name="Sugiura K."/>
            <person name="Sultana R."/>
            <person name="Takenaka Y."/>
            <person name="Taki K."/>
            <person name="Tammoja K."/>
            <person name="Tan S.L."/>
            <person name="Tang S."/>
            <person name="Taylor M.S."/>
            <person name="Tegner J."/>
            <person name="Teichmann S.A."/>
            <person name="Ueda H.R."/>
            <person name="van Nimwegen E."/>
            <person name="Verardo R."/>
            <person name="Wei C.L."/>
            <person name="Yagi K."/>
            <person name="Yamanishi H."/>
            <person name="Zabarovsky E."/>
            <person name="Zhu S."/>
            <person name="Zimmer A."/>
            <person name="Hide W."/>
            <person name="Bult C."/>
            <person name="Grimmond S.M."/>
            <person name="Teasdale R.D."/>
            <person name="Liu E.T."/>
            <person name="Brusic V."/>
            <person name="Quackenbush J."/>
            <person name="Wahlestedt C."/>
            <person name="Mattick J.S."/>
            <person name="Hume D.A."/>
            <person name="Kai C."/>
            <person name="Sasaki D."/>
            <person name="Tomaru Y."/>
            <person name="Fukuda S."/>
            <person name="Kanamori-Katayama M."/>
            <person name="Suzuki M."/>
            <person name="Aoki J."/>
            <person name="Arakawa T."/>
            <person name="Iida J."/>
            <person name="Imamura K."/>
            <person name="Itoh M."/>
            <person name="Kato T."/>
            <person name="Kawaji H."/>
            <person name="Kawagashira N."/>
            <person name="Kawashima T."/>
            <person name="Kojima M."/>
            <person name="Kondo S."/>
            <person name="Konno H."/>
            <person name="Nakano K."/>
            <person name="Ninomiya N."/>
            <person name="Nishio T."/>
            <person name="Okada M."/>
            <person name="Plessy C."/>
            <person name="Shibata K."/>
            <person name="Shiraki T."/>
            <person name="Suzuki S."/>
            <person name="Tagami M."/>
            <person name="Waki K."/>
            <person name="Watahiki A."/>
            <person name="Okamura-Oho Y."/>
            <person name="Suzuki H."/>
            <person name="Kawai J."/>
            <person name="Hayashizaki Y."/>
        </authorList>
    </citation>
    <scope>NUCLEOTIDE SEQUENCE [LARGE SCALE MRNA] (ISOFORM 1)</scope>
    <source>
        <strain>C57BL/6J</strain>
        <tissue>Testis</tissue>
    </source>
</reference>
<reference key="5">
    <citation type="journal article" date="2004" name="Genome Res.">
        <title>The status, quality, and expansion of the NIH full-length cDNA project: the Mammalian Gene Collection (MGC).</title>
        <authorList>
            <consortium name="The MGC Project Team"/>
        </authorList>
    </citation>
    <scope>NUCLEOTIDE SEQUENCE [LARGE SCALE MRNA] (ISOFORM 2)</scope>
    <scope>NUCLEOTIDE SEQUENCE [LARGE SCALE MRNA] OF 1-494 (ISOFORM 1)</scope>
    <source>
        <strain>FVB/N</strain>
        <tissue>Eye</tissue>
        <tissue>Mammary gland</tissue>
    </source>
</reference>
<reference key="6">
    <citation type="journal article" date="2003" name="Int. J. Androl.">
        <title>Microtubule-associated epithelial protein E-MAP-115 is localized in the spermatid manchette.</title>
        <authorList>
            <person name="Penttilae T.-L."/>
            <person name="Parvinen M."/>
            <person name="Paranko J."/>
        </authorList>
    </citation>
    <scope>TISSUE SPECIFICITY</scope>
</reference>
<reference key="7">
    <citation type="journal article" date="2010" name="Cell">
        <title>A tissue-specific atlas of mouse protein phosphorylation and expression.</title>
        <authorList>
            <person name="Huttlin E.L."/>
            <person name="Jedrychowski M.P."/>
            <person name="Elias J.E."/>
            <person name="Goswami T."/>
            <person name="Rad R."/>
            <person name="Beausoleil S.A."/>
            <person name="Villen J."/>
            <person name="Haas W."/>
            <person name="Sowa M.E."/>
            <person name="Gygi S.P."/>
        </authorList>
    </citation>
    <scope>PHOSPHORYLATION [LARGE SCALE ANALYSIS] AT SER-202 AND SER-209</scope>
    <scope>IDENTIFICATION BY MASS SPECTROMETRY [LARGE SCALE ANALYSIS]</scope>
    <source>
        <tissue>Heart</tissue>
        <tissue>Kidney</tissue>
        <tissue>Lung</tissue>
        <tissue>Pancreas</tissue>
        <tissue>Spleen</tissue>
    </source>
</reference>
<comment type="function">
    <text evidence="6">Microtubule-stabilizing protein that may play an important role during reorganization of microtubules during polarization and differentiation of epithelial cells. Associates with microtubules in a dynamic manner. May play a role in the formation of intercellular contacts. Colocalization with TRPV4 results in the redistribution of TRPV4 toward the membrane and may link cytoskeletal microfilaments.</text>
</comment>
<comment type="subunit">
    <text evidence="6">Interacts with TRPV4.</text>
</comment>
<comment type="subcellular location">
    <subcellularLocation>
        <location evidence="6">Cytoplasm</location>
        <location evidence="6">Perinuclear region</location>
    </subcellularLocation>
    <subcellularLocation>
        <location evidence="6">Basolateral cell membrane</location>
    </subcellularLocation>
    <subcellularLocation>
        <location evidence="6">Cytoplasm</location>
        <location evidence="6">Cytoskeleton</location>
    </subcellularLocation>
    <text>Colocalized on microtubules. An intracellular redistribution is triggered during induction of keratinocyte terminal differentiation from microtubules with a perinuclear localization to cortical microtubules organized in spike-like bundles facing intercellular contacts.</text>
</comment>
<comment type="alternative products">
    <event type="alternative splicing"/>
    <isoform>
        <id>O88735-1</id>
        <name>1</name>
        <sequence type="displayed"/>
    </isoform>
    <isoform>
        <id>O88735-2</id>
        <name>2</name>
        <sequence type="described" ref="VSP_021318"/>
    </isoform>
</comment>
<comment type="tissue specificity">
    <text evidence="5 6 7">Highly expressed in the epithelial cells of the kidney tubules and in the absorptive cells of the intestine, and widely distributed in the testis. Expression correlates with the differentiation of certain epithelial cell types: in the adult intestine, more abundantly expressed in the differentiating than in the proliferative cell compartment. The expression clearly correlates with the degree of cellular apicobasal polarity. Expressed in lung, kidney, brain and fat. Colocalized with TRPV4 in ependymal cells, in the choroid plexus, in bronchial and renal cortical tubular cells. Widely expressed in excitable neuronal cells, vascular cells as well as in epithelial cells. In seminiferous epithelium, associated with the microtubule of the spermatid manchette.</text>
</comment>
<comment type="developmental stage">
    <text evidence="7">Expressed in several epithelia from 9.5 dpc onwards, with expression levels increasing during development. From 14.5 dpc onwards, found in some neuronal cells as well.</text>
</comment>
<comment type="PTM">
    <text evidence="1">The association with microtubules is regulated by phosphorylation during the cell cycle. During interphase only phosphorylated on serine. Phosphorylated on threonine in mitosis (By similarity).</text>
</comment>
<comment type="similarity">
    <text evidence="9">Belongs to the MAP7 family.</text>
</comment>
<comment type="sequence caution" evidence="9">
    <conflict type="miscellaneous discrepancy">
        <sequence resource="EMBL-CDS" id="AAH42771"/>
    </conflict>
    <text>Contaminating sequence. Potential poly-A sequence.</text>
</comment>
<evidence type="ECO:0000250" key="1"/>
<evidence type="ECO:0000250" key="2">
    <source>
        <dbReference type="UniProtKB" id="Q14244"/>
    </source>
</evidence>
<evidence type="ECO:0000255" key="3"/>
<evidence type="ECO:0000256" key="4">
    <source>
        <dbReference type="SAM" id="MobiDB-lite"/>
    </source>
</evidence>
<evidence type="ECO:0000269" key="5">
    <source>
    </source>
</evidence>
<evidence type="ECO:0000269" key="6">
    <source>
    </source>
</evidence>
<evidence type="ECO:0000269" key="7">
    <source>
    </source>
</evidence>
<evidence type="ECO:0000303" key="8">
    <source>
    </source>
</evidence>
<evidence type="ECO:0000305" key="9"/>
<evidence type="ECO:0007744" key="10">
    <source>
    </source>
</evidence>
<dbReference type="EMBL" id="Y15197">
    <property type="protein sequence ID" value="CAA75495.1"/>
    <property type="molecule type" value="mRNA"/>
</dbReference>
<dbReference type="EMBL" id="AB098611">
    <property type="protein sequence ID" value="BAC53729.1"/>
    <property type="molecule type" value="mRNA"/>
</dbReference>
<dbReference type="EMBL" id="AK133267">
    <property type="protein sequence ID" value="BAE21585.1"/>
    <property type="molecule type" value="mRNA"/>
</dbReference>
<dbReference type="EMBL" id="BC042771">
    <property type="protein sequence ID" value="AAH42771.1"/>
    <property type="status" value="ALT_SEQ"/>
    <property type="molecule type" value="mRNA"/>
</dbReference>
<dbReference type="EMBL" id="BC052637">
    <property type="protein sequence ID" value="AAH52637.1"/>
    <property type="molecule type" value="mRNA"/>
</dbReference>
<dbReference type="CCDS" id="CCDS56694.1">
    <molecule id="O88735-2"/>
</dbReference>
<dbReference type="CCDS" id="CCDS87968.1">
    <molecule id="O88735-1"/>
</dbReference>
<dbReference type="RefSeq" id="NP_001185564.1">
    <property type="nucleotide sequence ID" value="NM_001198635.1"/>
</dbReference>
<dbReference type="RefSeq" id="NP_032661.2">
    <property type="nucleotide sequence ID" value="NM_008635.2"/>
</dbReference>
<dbReference type="SMR" id="O88735"/>
<dbReference type="BioGRID" id="201588">
    <property type="interactions" value="3"/>
</dbReference>
<dbReference type="FunCoup" id="O88735">
    <property type="interactions" value="377"/>
</dbReference>
<dbReference type="IntAct" id="O88735">
    <property type="interactions" value="1"/>
</dbReference>
<dbReference type="MINT" id="O88735"/>
<dbReference type="STRING" id="10090.ENSMUSP00000111963"/>
<dbReference type="GlyGen" id="O88735">
    <property type="glycosylation" value="1 site"/>
</dbReference>
<dbReference type="iPTMnet" id="O88735"/>
<dbReference type="PhosphoSitePlus" id="O88735"/>
<dbReference type="PaxDb" id="10090-ENSMUSP00000111963"/>
<dbReference type="PeptideAtlas" id="O88735"/>
<dbReference type="ProteomicsDB" id="295820">
    <molecule id="O88735-1"/>
</dbReference>
<dbReference type="ProteomicsDB" id="295821">
    <molecule id="O88735-2"/>
</dbReference>
<dbReference type="DNASU" id="17761"/>
<dbReference type="GeneID" id="17761"/>
<dbReference type="KEGG" id="mmu:17761"/>
<dbReference type="UCSC" id="uc007eno.2">
    <molecule id="O88735-1"/>
    <property type="organism name" value="mouse"/>
</dbReference>
<dbReference type="AGR" id="MGI:1328328"/>
<dbReference type="CTD" id="9053"/>
<dbReference type="MGI" id="MGI:1328328">
    <property type="gene designation" value="Map7"/>
</dbReference>
<dbReference type="eggNOG" id="ENOG502QTDQ">
    <property type="taxonomic scope" value="Eukaryota"/>
</dbReference>
<dbReference type="InParanoid" id="O88735"/>
<dbReference type="OrthoDB" id="8948920at2759"/>
<dbReference type="PhylomeDB" id="O88735"/>
<dbReference type="BioGRID-ORCS" id="17761">
    <property type="hits" value="5 hits in 76 CRISPR screens"/>
</dbReference>
<dbReference type="CD-CODE" id="CE726F99">
    <property type="entry name" value="Postsynaptic density"/>
</dbReference>
<dbReference type="ChiTaRS" id="Map7">
    <property type="organism name" value="mouse"/>
</dbReference>
<dbReference type="PRO" id="PR:O88735"/>
<dbReference type="Proteomes" id="UP000000589">
    <property type="component" value="Unplaced"/>
</dbReference>
<dbReference type="RNAct" id="O88735">
    <property type="molecule type" value="protein"/>
</dbReference>
<dbReference type="GO" id="GO:0016323">
    <property type="term" value="C:basolateral plasma membrane"/>
    <property type="evidence" value="ECO:0007669"/>
    <property type="project" value="UniProtKB-SubCell"/>
</dbReference>
<dbReference type="GO" id="GO:0005874">
    <property type="term" value="C:microtubule"/>
    <property type="evidence" value="ECO:0007669"/>
    <property type="project" value="UniProtKB-KW"/>
</dbReference>
<dbReference type="GO" id="GO:0048471">
    <property type="term" value="C:perinuclear region of cytoplasm"/>
    <property type="evidence" value="ECO:0007669"/>
    <property type="project" value="UniProtKB-SubCell"/>
</dbReference>
<dbReference type="GO" id="GO:0005886">
    <property type="term" value="C:plasma membrane"/>
    <property type="evidence" value="ECO:0000314"/>
    <property type="project" value="MGI"/>
</dbReference>
<dbReference type="GO" id="GO:0005102">
    <property type="term" value="F:signaling receptor binding"/>
    <property type="evidence" value="ECO:0000353"/>
    <property type="project" value="BHF-UCL"/>
</dbReference>
<dbReference type="GO" id="GO:0000902">
    <property type="term" value="P:cell morphogenesis"/>
    <property type="evidence" value="ECO:0000315"/>
    <property type="project" value="MGI"/>
</dbReference>
<dbReference type="GO" id="GO:0008283">
    <property type="term" value="P:cell population proliferation"/>
    <property type="evidence" value="ECO:0000315"/>
    <property type="project" value="MGI"/>
</dbReference>
<dbReference type="GO" id="GO:0009566">
    <property type="term" value="P:fertilization"/>
    <property type="evidence" value="ECO:0000315"/>
    <property type="project" value="MGI"/>
</dbReference>
<dbReference type="GO" id="GO:0007281">
    <property type="term" value="P:germ cell development"/>
    <property type="evidence" value="ECO:0000315"/>
    <property type="project" value="MGI"/>
</dbReference>
<dbReference type="GO" id="GO:0006687">
    <property type="term" value="P:glycosphingolipid metabolic process"/>
    <property type="evidence" value="ECO:0000315"/>
    <property type="project" value="MGI"/>
</dbReference>
<dbReference type="GO" id="GO:0048872">
    <property type="term" value="P:homeostasis of number of cells"/>
    <property type="evidence" value="ECO:0000315"/>
    <property type="project" value="MGI"/>
</dbReference>
<dbReference type="GO" id="GO:0033327">
    <property type="term" value="P:Leydig cell differentiation"/>
    <property type="evidence" value="ECO:0000315"/>
    <property type="project" value="MGI"/>
</dbReference>
<dbReference type="GO" id="GO:0001578">
    <property type="term" value="P:microtubule bundle formation"/>
    <property type="evidence" value="ECO:0000315"/>
    <property type="project" value="MGI"/>
</dbReference>
<dbReference type="GO" id="GO:0006997">
    <property type="term" value="P:nucleus organization"/>
    <property type="evidence" value="ECO:0000315"/>
    <property type="project" value="MGI"/>
</dbReference>
<dbReference type="GO" id="GO:0035265">
    <property type="term" value="P:organ growth"/>
    <property type="evidence" value="ECO:0000315"/>
    <property type="project" value="MGI"/>
</dbReference>
<dbReference type="GO" id="GO:0072659">
    <property type="term" value="P:protein localization to plasma membrane"/>
    <property type="evidence" value="ECO:0000314"/>
    <property type="project" value="BHF-UCL"/>
</dbReference>
<dbReference type="GO" id="GO:0006970">
    <property type="term" value="P:response to osmotic stress"/>
    <property type="evidence" value="ECO:0000314"/>
    <property type="project" value="BHF-UCL"/>
</dbReference>
<dbReference type="GO" id="GO:0032526">
    <property type="term" value="P:response to retinoic acid"/>
    <property type="evidence" value="ECO:0000315"/>
    <property type="project" value="MGI"/>
</dbReference>
<dbReference type="GO" id="GO:0060009">
    <property type="term" value="P:Sertoli cell development"/>
    <property type="evidence" value="ECO:0000315"/>
    <property type="project" value="MGI"/>
</dbReference>
<dbReference type="GO" id="GO:0007283">
    <property type="term" value="P:spermatogenesis"/>
    <property type="evidence" value="ECO:0000315"/>
    <property type="project" value="MGI"/>
</dbReference>
<dbReference type="InterPro" id="IPR051483">
    <property type="entry name" value="MAP7_domain-containing"/>
</dbReference>
<dbReference type="InterPro" id="IPR008604">
    <property type="entry name" value="MAP7_fam"/>
</dbReference>
<dbReference type="PANTHER" id="PTHR15073:SF4">
    <property type="entry name" value="ENSCONSIN"/>
    <property type="match status" value="1"/>
</dbReference>
<dbReference type="PANTHER" id="PTHR15073">
    <property type="entry name" value="MICROTUBULE-ASSOCIATED PROTEIN"/>
    <property type="match status" value="1"/>
</dbReference>
<dbReference type="Pfam" id="PF05672">
    <property type="entry name" value="MAP7"/>
    <property type="match status" value="1"/>
</dbReference>
<gene>
    <name type="primary">Map7</name>
    <name type="synonym">Mtap7</name>
</gene>
<organism>
    <name type="scientific">Mus musculus</name>
    <name type="common">Mouse</name>
    <dbReference type="NCBI Taxonomy" id="10090"/>
    <lineage>
        <taxon>Eukaryota</taxon>
        <taxon>Metazoa</taxon>
        <taxon>Chordata</taxon>
        <taxon>Craniata</taxon>
        <taxon>Vertebrata</taxon>
        <taxon>Euteleostomi</taxon>
        <taxon>Mammalia</taxon>
        <taxon>Eutheria</taxon>
        <taxon>Euarchontoglires</taxon>
        <taxon>Glires</taxon>
        <taxon>Rodentia</taxon>
        <taxon>Myomorpha</taxon>
        <taxon>Muroidea</taxon>
        <taxon>Muridae</taxon>
        <taxon>Murinae</taxon>
        <taxon>Mus</taxon>
        <taxon>Mus</taxon>
    </lineage>
</organism>
<protein>
    <recommendedName>
        <fullName>Ensconsin</fullName>
    </recommendedName>
    <alternativeName>
        <fullName>Epithelial microtubule-associated protein of 115 kDa</fullName>
        <shortName>E-MAP-115</shortName>
    </alternativeName>
    <alternativeName>
        <fullName>Microtubule-associated protein 7</fullName>
        <shortName>MAP-7</shortName>
    </alternativeName>
</protein>
<keyword id="KW-0007">Acetylation</keyword>
<keyword id="KW-0025">Alternative splicing</keyword>
<keyword id="KW-1003">Cell membrane</keyword>
<keyword id="KW-0175">Coiled coil</keyword>
<keyword id="KW-0963">Cytoplasm</keyword>
<keyword id="KW-0206">Cytoskeleton</keyword>
<keyword id="KW-1017">Isopeptide bond</keyword>
<keyword id="KW-0472">Membrane</keyword>
<keyword id="KW-0493">Microtubule</keyword>
<keyword id="KW-0597">Phosphoprotein</keyword>
<keyword id="KW-1185">Reference proteome</keyword>
<keyword id="KW-0832">Ubl conjugation</keyword>
<feature type="initiator methionine" description="Removed" evidence="2">
    <location>
        <position position="1"/>
    </location>
</feature>
<feature type="chain" id="PRO_0000255950" description="Ensconsin">
    <location>
        <begin position="2"/>
        <end position="730"/>
    </location>
</feature>
<feature type="region of interest" description="Disordered" evidence="4">
    <location>
        <begin position="1"/>
        <end position="183"/>
    </location>
</feature>
<feature type="region of interest" description="Disordered" evidence="4">
    <location>
        <begin position="291"/>
        <end position="388"/>
    </location>
</feature>
<feature type="region of interest" description="Disordered" evidence="4">
    <location>
        <begin position="403"/>
        <end position="669"/>
    </location>
</feature>
<feature type="coiled-coil region" evidence="3">
    <location>
        <begin position="89"/>
        <end position="152"/>
    </location>
</feature>
<feature type="coiled-coil region" evidence="3">
    <location>
        <begin position="460"/>
        <end position="589"/>
    </location>
</feature>
<feature type="compositionally biased region" description="Polar residues" evidence="4">
    <location>
        <begin position="37"/>
        <end position="52"/>
    </location>
</feature>
<feature type="compositionally biased region" description="Basic and acidic residues" evidence="4">
    <location>
        <begin position="62"/>
        <end position="151"/>
    </location>
</feature>
<feature type="compositionally biased region" description="Basic and acidic residues" evidence="4">
    <location>
        <begin position="294"/>
        <end position="304"/>
    </location>
</feature>
<feature type="compositionally biased region" description="Low complexity" evidence="4">
    <location>
        <begin position="357"/>
        <end position="367"/>
    </location>
</feature>
<feature type="compositionally biased region" description="Basic and acidic residues" evidence="4">
    <location>
        <begin position="373"/>
        <end position="386"/>
    </location>
</feature>
<feature type="compositionally biased region" description="Pro residues" evidence="4">
    <location>
        <begin position="425"/>
        <end position="439"/>
    </location>
</feature>
<feature type="compositionally biased region" description="Low complexity" evidence="4">
    <location>
        <begin position="440"/>
        <end position="453"/>
    </location>
</feature>
<feature type="compositionally biased region" description="Basic and acidic residues" evidence="4">
    <location>
        <begin position="461"/>
        <end position="610"/>
    </location>
</feature>
<feature type="compositionally biased region" description="Polar residues" evidence="4">
    <location>
        <begin position="645"/>
        <end position="655"/>
    </location>
</feature>
<feature type="modified residue" description="N-acetylalanine" evidence="2">
    <location>
        <position position="2"/>
    </location>
</feature>
<feature type="modified residue" description="Phosphoserine" evidence="2">
    <location>
        <position position="161"/>
    </location>
</feature>
<feature type="modified residue" description="Phosphoserine" evidence="2">
    <location>
        <position position="183"/>
    </location>
</feature>
<feature type="modified residue" description="Phosphoserine" evidence="2">
    <location>
        <position position="200"/>
    </location>
</feature>
<feature type="modified residue" description="Phosphoserine" evidence="10">
    <location>
        <position position="202"/>
    </location>
</feature>
<feature type="modified residue" description="Phosphoserine" evidence="10">
    <location>
        <position position="209"/>
    </location>
</feature>
<feature type="modified residue" description="Phosphoserine" evidence="2">
    <location>
        <position position="219"/>
    </location>
</feature>
<feature type="modified residue" description="Phosphothreonine" evidence="2">
    <location>
        <position position="231"/>
    </location>
</feature>
<feature type="modified residue" description="Phosphoserine" evidence="2">
    <location>
        <position position="235"/>
    </location>
</feature>
<feature type="modified residue" description="Phosphoserine" evidence="2">
    <location>
        <position position="254"/>
    </location>
</feature>
<feature type="modified residue" description="Phosphothreonine" evidence="2">
    <location>
        <position position="277"/>
    </location>
</feature>
<feature type="modified residue" description="Phosphoserine" evidence="2">
    <location>
        <position position="282"/>
    </location>
</feature>
<feature type="modified residue" description="Phosphoserine" evidence="2">
    <location>
        <position position="336"/>
    </location>
</feature>
<feature type="modified residue" description="Phosphoserine" evidence="2">
    <location>
        <position position="366"/>
    </location>
</feature>
<feature type="cross-link" description="Glycyl lysine isopeptide (Lys-Gly) (interchain with G-Cter in SUMO2)" evidence="2">
    <location>
        <position position="273"/>
    </location>
</feature>
<feature type="cross-link" description="Glycyl lysine isopeptide (Lys-Gly) (interchain with G-Cter in SUMO2)" evidence="2">
    <location>
        <position position="295"/>
    </location>
</feature>
<feature type="cross-link" description="Glycyl lysine isopeptide (Lys-Gly) (interchain with G-Cter in SUMO2)" evidence="2">
    <location>
        <position position="374"/>
    </location>
</feature>
<feature type="cross-link" description="Glycyl lysine isopeptide (Lys-Gly) (interchain with G-Cter in SUMO2)" evidence="2">
    <location>
        <position position="378"/>
    </location>
</feature>
<feature type="cross-link" description="Glycyl lysine isopeptide (Lys-Gly) (interchain with G-Cter in SUMO2)" evidence="2">
    <location>
        <position position="398"/>
    </location>
</feature>
<feature type="splice variant" id="VSP_021318" description="In isoform 2." evidence="8">
    <original>T</original>
    <variation>TVIPICPRS</variation>
    <location>
        <position position="250"/>
    </location>
</feature>
<feature type="sequence conflict" description="In Ref. 4; BAE21585." evidence="9" ref="4">
    <original>Q</original>
    <variation>H</variation>
    <location>
        <position position="4"/>
    </location>
</feature>
<feature type="sequence conflict" description="In Ref. 4; BAE21585." evidence="9" ref="4">
    <original>G</original>
    <variation>C</variation>
    <location>
        <position position="8"/>
    </location>
</feature>
<feature type="sequence conflict" description="In Ref. 4; BAE21585." evidence="9" ref="4">
    <original>G</original>
    <variation>S</variation>
    <location>
        <position position="16"/>
    </location>
</feature>
<feature type="sequence conflict" description="In Ref. 4; BAE21585." evidence="9" ref="4">
    <original>A</original>
    <variation>G</variation>
    <location>
        <position position="35"/>
    </location>
</feature>
<feature type="sequence conflict" description="In Ref. 5; AAH42771." evidence="9" ref="5">
    <original>A</original>
    <variation>T</variation>
    <location>
        <position position="360"/>
    </location>
</feature>
<feature type="sequence conflict" description="In Ref. 4; BAE21585 and 5; AAH52637/AAH42771." evidence="9" ref="4 5">
    <original>F</original>
    <variation>V</variation>
    <location>
        <position position="373"/>
    </location>
</feature>
<sequence length="730" mass="82022">MAEQGAGGDGHRGGDGATHSDPASDGYKVQEKRTAPSRPTSTVSGQTSNHSGNKPDPPPVLRVDDRQRLARERREEREKQLAARETVWLEREERARQHYERHLEARKKKLEDQRLKEERRRAAVEEKRRQRLEEDKERHEAVVRRTMERSQKPRQKSNRWSWGSPLHGSSSIHSGDPDRRSVSTMNLSKHVDPVISKRLSSSSATLLNSPDRARRLQLSPWESSVVSRLLTPTHSFLARSKSTAALSGDTASCSPIIMPFKAAHSRNPVDRPKLFVTPPEGSARRRTIHGLASHKREREREHVPFHVSPGARRTLSPSNLKARSPAPARLWLPSKSMPHLPGTPRPASSLPPGSVRAASAQAPSSSPGNIRPFKREVKVEPEKKDPLPAVKSRVPLVKVEEVTVEEGTPVKPPEPAAPASAPIATPAPAPATDPAPVPAPSSTVTVGVVPKTSAGTTDPEEATRLLAEKRRLAREQREKEERERKEKEELERQKIEELARRVAEERSRREEEARRLEEEQAREKEELALRLAEEERERWEREEVERVQKQKEEEARAREEAERARQEREKHFQKEEQERLERKKRLEEIMRRTRRTETADKKTTEQRNGDIAKGVLTGEPEVPALPCMASSGNGESAESPHGVALQQSEVTTESSPDLEKQPNENGMSIQNENFEEVINLPVGSKASRLDVTNENPEIPLKPILAFNDEGTLGPLPQVDGVQTQQTAEVI</sequence>
<name>MAP7_MOUSE</name>
<proteinExistence type="evidence at protein level"/>